<reference key="1">
    <citation type="journal article" date="1995" name="Science">
        <title>Whole-genome random sequencing and assembly of Haemophilus influenzae Rd.</title>
        <authorList>
            <person name="Fleischmann R.D."/>
            <person name="Adams M.D."/>
            <person name="White O."/>
            <person name="Clayton R.A."/>
            <person name="Kirkness E.F."/>
            <person name="Kerlavage A.R."/>
            <person name="Bult C.J."/>
            <person name="Tomb J.-F."/>
            <person name="Dougherty B.A."/>
            <person name="Merrick J.M."/>
            <person name="McKenney K."/>
            <person name="Sutton G.G."/>
            <person name="FitzHugh W."/>
            <person name="Fields C.A."/>
            <person name="Gocayne J.D."/>
            <person name="Scott J.D."/>
            <person name="Shirley R."/>
            <person name="Liu L.-I."/>
            <person name="Glodek A."/>
            <person name="Kelley J.M."/>
            <person name="Weidman J.F."/>
            <person name="Phillips C.A."/>
            <person name="Spriggs T."/>
            <person name="Hedblom E."/>
            <person name="Cotton M.D."/>
            <person name="Utterback T.R."/>
            <person name="Hanna M.C."/>
            <person name="Nguyen D.T."/>
            <person name="Saudek D.M."/>
            <person name="Brandon R.C."/>
            <person name="Fine L.D."/>
            <person name="Fritchman J.L."/>
            <person name="Fuhrmann J.L."/>
            <person name="Geoghagen N.S.M."/>
            <person name="Gnehm C.L."/>
            <person name="McDonald L.A."/>
            <person name="Small K.V."/>
            <person name="Fraser C.M."/>
            <person name="Smith H.O."/>
            <person name="Venter J.C."/>
        </authorList>
    </citation>
    <scope>NUCLEOTIDE SEQUENCE [LARGE SCALE GENOMIC DNA]</scope>
    <source>
        <strain>ATCC 51907 / DSM 11121 / KW20 / Rd</strain>
    </source>
</reference>
<reference key="2">
    <citation type="journal article" date="1995" name="J. Bacteriol.">
        <title>DNA sequence and characterization of Haemophilus influenzae dprA+, a gene required for chromosomal but not plasmid DNA transformation.</title>
        <authorList>
            <person name="Karudapuram S."/>
            <person name="Zhao X."/>
            <person name="Barcak G.J."/>
        </authorList>
    </citation>
    <scope>NUCLEOTIDE SEQUENCE [GENOMIC DNA] OF 1-74</scope>
    <source>
        <strain>ATCC 51907 / DSM 11121 / KW20 / Rd</strain>
    </source>
</reference>
<evidence type="ECO:0000255" key="1">
    <source>
        <dbReference type="HAMAP-Rule" id="MF_01025"/>
    </source>
</evidence>
<evidence type="ECO:0000305" key="2"/>
<sequence length="515" mass="56081">MTDRVIIFDTTLRDGEQALKASLTVKEKLQIALALERLGVDVMEVGFPVSSQGDFESVQTIARHIKNARVAALSRAVDKDIDAAYEALKVAEAFRIHTFIASSALHVEAKLKRSFDDVVGMAVAAVKRARNYTDDVEFSCEDAGRTGIDNICRIVEAAINAGATTVNIPDTVGFCLPNEYGNIIAQVRNCVPNIDKAVISVHCHNDLGMATANSLTAVQNGARQIECTINGIGERAGNTSLEEVVMAMKVRQDFMGVDTHINTQEIHRVSQMVSQLCNMPIQPNKAIVGSNAFAHSSGIHQDGMLKNKNTYEILSPETIGLKKEKLNLTARSGRAAVKGHMADMGYNEQDYDLDKLYDEFLKLADKKGQVFDYDLEALAFIDMQQGDEDRLVLDKLSAHSTKEYPATAFVQLKLDGEKLSTSSIGGNGPVDAVYNAILNLTGLEIKMSHYNLTAKGEGAEALGQVDIVVEHKGRKFHGVGLATDIVESSALALVHAINAIYRAHKVADIKNHKHH</sequence>
<gene>
    <name evidence="1" type="primary">leuA</name>
    <name type="ordered locus">HI_0986</name>
</gene>
<proteinExistence type="inferred from homology"/>
<accession>P43861</accession>
<dbReference type="EC" id="2.3.3.13" evidence="1"/>
<dbReference type="EMBL" id="L42023">
    <property type="protein sequence ID" value="AAC22647.1"/>
    <property type="status" value="ALT_INIT"/>
    <property type="molecule type" value="Genomic_DNA"/>
</dbReference>
<dbReference type="EMBL" id="U18657">
    <property type="protein sequence ID" value="AAA70115.1"/>
    <property type="molecule type" value="Genomic_DNA"/>
</dbReference>
<dbReference type="PIR" id="E64106">
    <property type="entry name" value="E64106"/>
</dbReference>
<dbReference type="RefSeq" id="NP_439149.2">
    <property type="nucleotide sequence ID" value="NC_000907.1"/>
</dbReference>
<dbReference type="SMR" id="P43861"/>
<dbReference type="STRING" id="71421.HI_0986"/>
<dbReference type="EnsemblBacteria" id="AAC22647">
    <property type="protein sequence ID" value="AAC22647"/>
    <property type="gene ID" value="HI_0986"/>
</dbReference>
<dbReference type="KEGG" id="hin:HI_0986"/>
<dbReference type="PATRIC" id="fig|71421.8.peg.1029"/>
<dbReference type="eggNOG" id="COG0119">
    <property type="taxonomic scope" value="Bacteria"/>
</dbReference>
<dbReference type="HOGENOM" id="CLU_022158_0_1_6"/>
<dbReference type="OrthoDB" id="9803573at2"/>
<dbReference type="PhylomeDB" id="P43861"/>
<dbReference type="BioCyc" id="HINF71421:G1GJ1-1028-MONOMER"/>
<dbReference type="UniPathway" id="UPA00048">
    <property type="reaction ID" value="UER00070"/>
</dbReference>
<dbReference type="Proteomes" id="UP000000579">
    <property type="component" value="Chromosome"/>
</dbReference>
<dbReference type="GO" id="GO:0005829">
    <property type="term" value="C:cytosol"/>
    <property type="evidence" value="ECO:0000318"/>
    <property type="project" value="GO_Central"/>
</dbReference>
<dbReference type="GO" id="GO:0003852">
    <property type="term" value="F:2-isopropylmalate synthase activity"/>
    <property type="evidence" value="ECO:0000318"/>
    <property type="project" value="GO_Central"/>
</dbReference>
<dbReference type="GO" id="GO:0003985">
    <property type="term" value="F:acetyl-CoA C-acetyltransferase activity"/>
    <property type="evidence" value="ECO:0007669"/>
    <property type="project" value="UniProtKB-UniRule"/>
</dbReference>
<dbReference type="GO" id="GO:0030145">
    <property type="term" value="F:manganese ion binding"/>
    <property type="evidence" value="ECO:0007669"/>
    <property type="project" value="UniProtKB-UniRule"/>
</dbReference>
<dbReference type="GO" id="GO:0009098">
    <property type="term" value="P:L-leucine biosynthetic process"/>
    <property type="evidence" value="ECO:0000318"/>
    <property type="project" value="GO_Central"/>
</dbReference>
<dbReference type="CDD" id="cd07940">
    <property type="entry name" value="DRE_TIM_IPMS"/>
    <property type="match status" value="1"/>
</dbReference>
<dbReference type="FunFam" id="1.10.238.260:FF:000001">
    <property type="entry name" value="2-isopropylmalate synthase"/>
    <property type="match status" value="1"/>
</dbReference>
<dbReference type="FunFam" id="3.20.20.70:FF:000010">
    <property type="entry name" value="2-isopropylmalate synthase"/>
    <property type="match status" value="1"/>
</dbReference>
<dbReference type="FunFam" id="3.30.160.270:FF:000001">
    <property type="entry name" value="2-isopropylmalate synthase"/>
    <property type="match status" value="1"/>
</dbReference>
<dbReference type="Gene3D" id="1.10.238.260">
    <property type="match status" value="1"/>
</dbReference>
<dbReference type="Gene3D" id="3.30.160.270">
    <property type="match status" value="1"/>
</dbReference>
<dbReference type="Gene3D" id="3.20.20.70">
    <property type="entry name" value="Aldolase class I"/>
    <property type="match status" value="1"/>
</dbReference>
<dbReference type="HAMAP" id="MF_01025">
    <property type="entry name" value="LeuA_type1"/>
    <property type="match status" value="1"/>
</dbReference>
<dbReference type="InterPro" id="IPR050073">
    <property type="entry name" value="2-IPM_HCS-like"/>
</dbReference>
<dbReference type="InterPro" id="IPR013709">
    <property type="entry name" value="2-isopropylmalate_synth_dimer"/>
</dbReference>
<dbReference type="InterPro" id="IPR002034">
    <property type="entry name" value="AIPM/Hcit_synth_CS"/>
</dbReference>
<dbReference type="InterPro" id="IPR013785">
    <property type="entry name" value="Aldolase_TIM"/>
</dbReference>
<dbReference type="InterPro" id="IPR054691">
    <property type="entry name" value="LeuA/HCS_post-cat"/>
</dbReference>
<dbReference type="InterPro" id="IPR036230">
    <property type="entry name" value="LeuA_allosteric_dom_sf"/>
</dbReference>
<dbReference type="InterPro" id="IPR005671">
    <property type="entry name" value="LeuA_bact_synth"/>
</dbReference>
<dbReference type="InterPro" id="IPR000891">
    <property type="entry name" value="PYR_CT"/>
</dbReference>
<dbReference type="NCBIfam" id="TIGR00973">
    <property type="entry name" value="leuA_bact"/>
    <property type="match status" value="1"/>
</dbReference>
<dbReference type="NCBIfam" id="NF002084">
    <property type="entry name" value="PRK00915.1-1"/>
    <property type="match status" value="1"/>
</dbReference>
<dbReference type="NCBIfam" id="NF002086">
    <property type="entry name" value="PRK00915.1-3"/>
    <property type="match status" value="1"/>
</dbReference>
<dbReference type="PANTHER" id="PTHR10277:SF9">
    <property type="entry name" value="2-ISOPROPYLMALATE SYNTHASE 1, CHLOROPLASTIC-RELATED"/>
    <property type="match status" value="1"/>
</dbReference>
<dbReference type="PANTHER" id="PTHR10277">
    <property type="entry name" value="HOMOCITRATE SYNTHASE-RELATED"/>
    <property type="match status" value="1"/>
</dbReference>
<dbReference type="Pfam" id="PF22617">
    <property type="entry name" value="HCS_D2"/>
    <property type="match status" value="1"/>
</dbReference>
<dbReference type="Pfam" id="PF00682">
    <property type="entry name" value="HMGL-like"/>
    <property type="match status" value="1"/>
</dbReference>
<dbReference type="Pfam" id="PF08502">
    <property type="entry name" value="LeuA_dimer"/>
    <property type="match status" value="1"/>
</dbReference>
<dbReference type="SMART" id="SM00917">
    <property type="entry name" value="LeuA_dimer"/>
    <property type="match status" value="1"/>
</dbReference>
<dbReference type="SUPFAM" id="SSF110921">
    <property type="entry name" value="2-isopropylmalate synthase LeuA, allosteric (dimerisation) domain"/>
    <property type="match status" value="1"/>
</dbReference>
<dbReference type="SUPFAM" id="SSF51569">
    <property type="entry name" value="Aldolase"/>
    <property type="match status" value="1"/>
</dbReference>
<dbReference type="PROSITE" id="PS00815">
    <property type="entry name" value="AIPM_HOMOCIT_SYNTH_1"/>
    <property type="match status" value="1"/>
</dbReference>
<dbReference type="PROSITE" id="PS00816">
    <property type="entry name" value="AIPM_HOMOCIT_SYNTH_2"/>
    <property type="match status" value="1"/>
</dbReference>
<dbReference type="PROSITE" id="PS50991">
    <property type="entry name" value="PYR_CT"/>
    <property type="match status" value="1"/>
</dbReference>
<name>LEU1_HAEIN</name>
<organism>
    <name type="scientific">Haemophilus influenzae (strain ATCC 51907 / DSM 11121 / KW20 / Rd)</name>
    <dbReference type="NCBI Taxonomy" id="71421"/>
    <lineage>
        <taxon>Bacteria</taxon>
        <taxon>Pseudomonadati</taxon>
        <taxon>Pseudomonadota</taxon>
        <taxon>Gammaproteobacteria</taxon>
        <taxon>Pasteurellales</taxon>
        <taxon>Pasteurellaceae</taxon>
        <taxon>Haemophilus</taxon>
    </lineage>
</organism>
<feature type="chain" id="PRO_0000140355" description="2-isopropylmalate synthase">
    <location>
        <begin position="1"/>
        <end position="515"/>
    </location>
</feature>
<feature type="domain" description="Pyruvate carboxyltransferase" evidence="1">
    <location>
        <begin position="5"/>
        <end position="267"/>
    </location>
</feature>
<feature type="region of interest" description="Regulatory domain" evidence="1">
    <location>
        <begin position="392"/>
        <end position="515"/>
    </location>
</feature>
<feature type="binding site" evidence="1">
    <location>
        <position position="14"/>
    </location>
    <ligand>
        <name>Mn(2+)</name>
        <dbReference type="ChEBI" id="CHEBI:29035"/>
    </ligand>
</feature>
<feature type="binding site" evidence="1">
    <location>
        <position position="202"/>
    </location>
    <ligand>
        <name>Mn(2+)</name>
        <dbReference type="ChEBI" id="CHEBI:29035"/>
    </ligand>
</feature>
<feature type="binding site" evidence="1">
    <location>
        <position position="204"/>
    </location>
    <ligand>
        <name>Mn(2+)</name>
        <dbReference type="ChEBI" id="CHEBI:29035"/>
    </ligand>
</feature>
<feature type="binding site" evidence="1">
    <location>
        <position position="238"/>
    </location>
    <ligand>
        <name>Mn(2+)</name>
        <dbReference type="ChEBI" id="CHEBI:29035"/>
    </ligand>
</feature>
<comment type="function">
    <text evidence="1">Catalyzes the condensation of the acetyl group of acetyl-CoA with 3-methyl-2-oxobutanoate (2-ketoisovalerate) to form 3-carboxy-3-hydroxy-4-methylpentanoate (2-isopropylmalate).</text>
</comment>
<comment type="catalytic activity">
    <reaction evidence="1">
        <text>3-methyl-2-oxobutanoate + acetyl-CoA + H2O = (2S)-2-isopropylmalate + CoA + H(+)</text>
        <dbReference type="Rhea" id="RHEA:21524"/>
        <dbReference type="ChEBI" id="CHEBI:1178"/>
        <dbReference type="ChEBI" id="CHEBI:11851"/>
        <dbReference type="ChEBI" id="CHEBI:15377"/>
        <dbReference type="ChEBI" id="CHEBI:15378"/>
        <dbReference type="ChEBI" id="CHEBI:57287"/>
        <dbReference type="ChEBI" id="CHEBI:57288"/>
        <dbReference type="EC" id="2.3.3.13"/>
    </reaction>
</comment>
<comment type="cofactor">
    <cofactor evidence="1">
        <name>Mn(2+)</name>
        <dbReference type="ChEBI" id="CHEBI:29035"/>
    </cofactor>
</comment>
<comment type="pathway">
    <text evidence="1">Amino-acid biosynthesis; L-leucine biosynthesis; L-leucine from 3-methyl-2-oxobutanoate: step 1/4.</text>
</comment>
<comment type="subunit">
    <text evidence="1">Homodimer.</text>
</comment>
<comment type="subcellular location">
    <subcellularLocation>
        <location evidence="1">Cytoplasm</location>
    </subcellularLocation>
</comment>
<comment type="similarity">
    <text evidence="1 2">Belongs to the alpha-IPM synthase/homocitrate synthase family. LeuA type 1 subfamily.</text>
</comment>
<comment type="sequence caution" evidence="2">
    <conflict type="erroneous initiation">
        <sequence resource="EMBL-CDS" id="AAC22647"/>
    </conflict>
    <text>Extended N-terminus.</text>
</comment>
<protein>
    <recommendedName>
        <fullName evidence="1">2-isopropylmalate synthase</fullName>
        <ecNumber evidence="1">2.3.3.13</ecNumber>
    </recommendedName>
    <alternativeName>
        <fullName evidence="1">Alpha-IPM synthase</fullName>
    </alternativeName>
    <alternativeName>
        <fullName evidence="1">Alpha-isopropylmalate synthase</fullName>
    </alternativeName>
</protein>
<keyword id="KW-0028">Amino-acid biosynthesis</keyword>
<keyword id="KW-0100">Branched-chain amino acid biosynthesis</keyword>
<keyword id="KW-0963">Cytoplasm</keyword>
<keyword id="KW-0432">Leucine biosynthesis</keyword>
<keyword id="KW-0464">Manganese</keyword>
<keyword id="KW-0479">Metal-binding</keyword>
<keyword id="KW-1185">Reference proteome</keyword>
<keyword id="KW-0808">Transferase</keyword>